<comment type="function">
    <text evidence="2 6 9 10">Ligand for members of the frizzled family of seven transmembrane receptors. Can activate or inhibit canonical Wnt signaling, depending on receptor context. In the presence of FZD4, activates beta-catenin signaling. In the presence of ROR2, inhibits the canonical Wnt pathway by promoting beta-catenin degradation through a GSK3-independent pathway which involves down-regulation of beta-catenin-induced reporter gene expression (By similarity). Suppression of the canonical pathway allows chondrogenesis to occur and inhibits tumor formation. Stimulates cell migration. Decreases proliferation, migration, invasiveness and clonogenicity of carcinoma cells and may act as a tumor suppressor (PubMed:15735754). Mediates motility of melanoma cells (PubMed:17426020). Required during embryogenesis for extension of the primary anterior-posterior axis and for outgrowth of limbs and the genital tubercle. Inhibits type II collagen expression in chondrocytes (By similarity).</text>
</comment>
<comment type="subunit">
    <text evidence="2 8 12 13 15">Forms a soluble 1:1 complex with AFM; this prevents oligomerization and is required for prolonged biological activity (PubMed:26902720). The complex with AFM may represent the physiological form in body fluids (PubMed:26902720). Homooligomer; disulfide-linked, leading to inactivation (in vitro). Interacts with PORCN. Interacts with WLS (By similarity). Interacts with glypican GCP3 (PubMed:14610063). Interacts with PKD1 (via extracellular domain) (PubMed:27214281). Interacts with TMEM67 (PubMed:34731008).</text>
</comment>
<comment type="interaction">
    <interactant intactId="EBI-6594545">
        <id>P41221</id>
    </interactant>
    <interactant intactId="EBI-3922719">
        <id>Q9Y5W5</id>
        <label>WIF1</label>
    </interactant>
    <organismsDiffer>false</organismsDiffer>
    <experiments>2</experiments>
</comment>
<comment type="interaction">
    <interactant intactId="EBI-6594545">
        <id>P41221</id>
    </interactant>
    <interactant intactId="EBI-2868748">
        <id>Q5T9L3</id>
        <label>WLS</label>
    </interactant>
    <organismsDiffer>false</organismsDiffer>
    <experiments>3</experiments>
</comment>
<comment type="subcellular location">
    <subcellularLocation>
        <location evidence="19">Secreted</location>
        <location evidence="19">Extracellular space</location>
        <location evidence="19">Extracellular matrix</location>
    </subcellularLocation>
    <subcellularLocation>
        <location evidence="12">Secreted</location>
    </subcellularLocation>
</comment>
<comment type="alternative products">
    <event type="alternative splicing"/>
    <isoform>
        <id>P41221-1</id>
        <name>1</name>
        <sequence type="displayed"/>
    </isoform>
    <isoform>
        <id>P41221-2</id>
        <name>2</name>
        <sequence type="described" ref="VSP_035594"/>
    </isoform>
</comment>
<comment type="tissue specificity">
    <text evidence="9 16">Expression is increased in differentiated thyroid carcinomas compared to normal thyroid tissue and anaplastic thyroid tumors where expression is low or undetectable. Expression is found in thyrocytes but not in stromal cells (at protein level) (PubMed:15735754). Detected in neonate heart and lung (PubMed:8288227).</text>
</comment>
<comment type="PTM">
    <text evidence="2">Glycosylation is necessary for secretion but not for activity.</text>
</comment>
<comment type="PTM">
    <text evidence="3 5">Palmitoleoylation is required for efficient binding to frizzled receptors. Depalmitoleoylation leads to Wnt signaling pathway inhibition.</text>
</comment>
<comment type="PTM">
    <text evidence="2">Proteolytic processing by TIKI1 and TIKI2 promotes oxidation and formation of large disulfide-bond oligomers, leading to inactivation of WNT5A.</text>
</comment>
<comment type="disease" evidence="11 14">
    <disease id="DI-03227">
        <name>Robinow syndrome, autosomal dominant 1</name>
        <acronym>DRS1</acronym>
        <description>A disease characterized by short-limb dwarfism, costovertebral segmentation defects and abnormalities of the head, face and external genitalia. The clinical signs are generally milder in dominant cases.</description>
        <dbReference type="MIM" id="180700"/>
    </disease>
    <text>The disease is caused by variants affecting the gene represented in this entry.</text>
</comment>
<comment type="similarity">
    <text evidence="19">Belongs to the Wnt family.</text>
</comment>
<comment type="online information" name="Atlas of Genetics and Cytogenetics in Oncology and Haematology">
    <link uri="https://atlasgeneticsoncology.org/gene/42825/WNT5A"/>
</comment>
<keyword id="KW-0025">Alternative splicing</keyword>
<keyword id="KW-0891">Chondrogenesis</keyword>
<keyword id="KW-0217">Developmental protein</keyword>
<keyword id="KW-0221">Differentiation</keyword>
<keyword id="KW-0225">Disease variant</keyword>
<keyword id="KW-1015">Disulfide bond</keyword>
<keyword id="KW-0242">Dwarfism</keyword>
<keyword id="KW-0272">Extracellular matrix</keyword>
<keyword id="KW-0325">Glycoprotein</keyword>
<keyword id="KW-0449">Lipoprotein</keyword>
<keyword id="KW-1267">Proteomics identification</keyword>
<keyword id="KW-1185">Reference proteome</keyword>
<keyword id="KW-0964">Secreted</keyword>
<keyword id="KW-0732">Signal</keyword>
<keyword id="KW-0879">Wnt signaling pathway</keyword>
<gene>
    <name type="primary">WNT5A</name>
</gene>
<sequence length="380" mass="42339">MKKSIGILSPGVALGMAGSAMSSKFFLVALAIFFSFAQVVIEANSWWSLGMNNPVQMSEVYIIGAQPLCSQLAGLSQGQKKLCHLYQDHMQYIGEGAKTGIKECQYQFRHRRWNCSTVDNTSVFGRVMQIGSRETAFTYAVSAAGVVNAMSRACREGELSTCGCSRAARPKDLPRDWLWGGCGDNIDYGYRFAKEFVDARERERIHAKGSYESARILMNLHNNEAGRRTVYNLADVACKCHGVSGSCSLKTCWLQLADFRKVGDALKEKYDSAAAMRLNSRGKLVQVNSRFNSPTTQDLVYIDPSPDYCVRNESTGSLGTQGRLCNKTSEGMDGCELMCCGRGYDQFKTVQTERCHCKFHWCCYVKCKKCTEIVDQFVCK</sequence>
<evidence type="ECO:0000250" key="1"/>
<evidence type="ECO:0000250" key="2">
    <source>
        <dbReference type="UniProtKB" id="P22725"/>
    </source>
</evidence>
<evidence type="ECO:0000250" key="3">
    <source>
        <dbReference type="UniProtKB" id="P27467"/>
    </source>
</evidence>
<evidence type="ECO:0000250" key="4">
    <source>
        <dbReference type="UniProtKB" id="P28026"/>
    </source>
</evidence>
<evidence type="ECO:0000250" key="5">
    <source>
        <dbReference type="UniProtKB" id="P56704"/>
    </source>
</evidence>
<evidence type="ECO:0000250" key="6">
    <source>
        <dbReference type="UniProtKB" id="Q27Q52"/>
    </source>
</evidence>
<evidence type="ECO:0000255" key="7"/>
<evidence type="ECO:0000269" key="8">
    <source>
    </source>
</evidence>
<evidence type="ECO:0000269" key="9">
    <source>
    </source>
</evidence>
<evidence type="ECO:0000269" key="10">
    <source>
    </source>
</evidence>
<evidence type="ECO:0000269" key="11">
    <source>
    </source>
</evidence>
<evidence type="ECO:0000269" key="12">
    <source>
    </source>
</evidence>
<evidence type="ECO:0000269" key="13">
    <source>
    </source>
</evidence>
<evidence type="ECO:0000269" key="14">
    <source>
    </source>
</evidence>
<evidence type="ECO:0000269" key="15">
    <source>
    </source>
</evidence>
<evidence type="ECO:0000269" key="16">
    <source>
    </source>
</evidence>
<evidence type="ECO:0000303" key="17">
    <source>
    </source>
</evidence>
<evidence type="ECO:0000303" key="18">
    <source>
    </source>
</evidence>
<evidence type="ECO:0000305" key="19"/>
<proteinExistence type="evidence at protein level"/>
<reference key="1">
    <citation type="journal article" date="1993" name="Genomics">
        <title>Molecular cloning of the human proto-oncogene Wnt-5A and mapping of the gene (WNT5A) to chromosome 3p14-p21.</title>
        <authorList>
            <person name="Clark C.C."/>
            <person name="Cohen I.R."/>
            <person name="Eichstetter I."/>
            <person name="Cannizarro L.A."/>
            <person name="McPherson J.D."/>
            <person name="Wasmuth J.J."/>
            <person name="Iozzo R.V."/>
        </authorList>
    </citation>
    <scope>NUCLEOTIDE SEQUENCE [MRNA] (ISOFORM 2)</scope>
    <scope>TISSUE SPECIFICITY</scope>
</reference>
<reference key="2">
    <citation type="journal article" date="2004" name="Nat. Genet.">
        <title>Complete sequencing and characterization of 21,243 full-length human cDNAs.</title>
        <authorList>
            <person name="Ota T."/>
            <person name="Suzuki Y."/>
            <person name="Nishikawa T."/>
            <person name="Otsuki T."/>
            <person name="Sugiyama T."/>
            <person name="Irie R."/>
            <person name="Wakamatsu A."/>
            <person name="Hayashi K."/>
            <person name="Sato H."/>
            <person name="Nagai K."/>
            <person name="Kimura K."/>
            <person name="Makita H."/>
            <person name="Sekine M."/>
            <person name="Obayashi M."/>
            <person name="Nishi T."/>
            <person name="Shibahara T."/>
            <person name="Tanaka T."/>
            <person name="Ishii S."/>
            <person name="Yamamoto J."/>
            <person name="Saito K."/>
            <person name="Kawai Y."/>
            <person name="Isono Y."/>
            <person name="Nakamura Y."/>
            <person name="Nagahari K."/>
            <person name="Murakami K."/>
            <person name="Yasuda T."/>
            <person name="Iwayanagi T."/>
            <person name="Wagatsuma M."/>
            <person name="Shiratori A."/>
            <person name="Sudo H."/>
            <person name="Hosoiri T."/>
            <person name="Kaku Y."/>
            <person name="Kodaira H."/>
            <person name="Kondo H."/>
            <person name="Sugawara M."/>
            <person name="Takahashi M."/>
            <person name="Kanda K."/>
            <person name="Yokoi T."/>
            <person name="Furuya T."/>
            <person name="Kikkawa E."/>
            <person name="Omura Y."/>
            <person name="Abe K."/>
            <person name="Kamihara K."/>
            <person name="Katsuta N."/>
            <person name="Sato K."/>
            <person name="Tanikawa M."/>
            <person name="Yamazaki M."/>
            <person name="Ninomiya K."/>
            <person name="Ishibashi T."/>
            <person name="Yamashita H."/>
            <person name="Murakawa K."/>
            <person name="Fujimori K."/>
            <person name="Tanai H."/>
            <person name="Kimata M."/>
            <person name="Watanabe M."/>
            <person name="Hiraoka S."/>
            <person name="Chiba Y."/>
            <person name="Ishida S."/>
            <person name="Ono Y."/>
            <person name="Takiguchi S."/>
            <person name="Watanabe S."/>
            <person name="Yosida M."/>
            <person name="Hotuta T."/>
            <person name="Kusano J."/>
            <person name="Kanehori K."/>
            <person name="Takahashi-Fujii A."/>
            <person name="Hara H."/>
            <person name="Tanase T.-O."/>
            <person name="Nomura Y."/>
            <person name="Togiya S."/>
            <person name="Komai F."/>
            <person name="Hara R."/>
            <person name="Takeuchi K."/>
            <person name="Arita M."/>
            <person name="Imose N."/>
            <person name="Musashino K."/>
            <person name="Yuuki H."/>
            <person name="Oshima A."/>
            <person name="Sasaki N."/>
            <person name="Aotsuka S."/>
            <person name="Yoshikawa Y."/>
            <person name="Matsunawa H."/>
            <person name="Ichihara T."/>
            <person name="Shiohata N."/>
            <person name="Sano S."/>
            <person name="Moriya S."/>
            <person name="Momiyama H."/>
            <person name="Satoh N."/>
            <person name="Takami S."/>
            <person name="Terashima Y."/>
            <person name="Suzuki O."/>
            <person name="Nakagawa S."/>
            <person name="Senoh A."/>
            <person name="Mizoguchi H."/>
            <person name="Goto Y."/>
            <person name="Shimizu F."/>
            <person name="Wakebe H."/>
            <person name="Hishigaki H."/>
            <person name="Watanabe T."/>
            <person name="Sugiyama A."/>
            <person name="Takemoto M."/>
            <person name="Kawakami B."/>
            <person name="Yamazaki M."/>
            <person name="Watanabe K."/>
            <person name="Kumagai A."/>
            <person name="Itakura S."/>
            <person name="Fukuzumi Y."/>
            <person name="Fujimori Y."/>
            <person name="Komiyama M."/>
            <person name="Tashiro H."/>
            <person name="Tanigami A."/>
            <person name="Fujiwara T."/>
            <person name="Ono T."/>
            <person name="Yamada K."/>
            <person name="Fujii Y."/>
            <person name="Ozaki K."/>
            <person name="Hirao M."/>
            <person name="Ohmori Y."/>
            <person name="Kawabata A."/>
            <person name="Hikiji T."/>
            <person name="Kobatake N."/>
            <person name="Inagaki H."/>
            <person name="Ikema Y."/>
            <person name="Okamoto S."/>
            <person name="Okitani R."/>
            <person name="Kawakami T."/>
            <person name="Noguchi S."/>
            <person name="Itoh T."/>
            <person name="Shigeta K."/>
            <person name="Senba T."/>
            <person name="Matsumura K."/>
            <person name="Nakajima Y."/>
            <person name="Mizuno T."/>
            <person name="Morinaga M."/>
            <person name="Sasaki M."/>
            <person name="Togashi T."/>
            <person name="Oyama M."/>
            <person name="Hata H."/>
            <person name="Watanabe M."/>
            <person name="Komatsu T."/>
            <person name="Mizushima-Sugano J."/>
            <person name="Satoh T."/>
            <person name="Shirai Y."/>
            <person name="Takahashi Y."/>
            <person name="Nakagawa K."/>
            <person name="Okumura K."/>
            <person name="Nagase T."/>
            <person name="Nomura N."/>
            <person name="Kikuchi H."/>
            <person name="Masuho Y."/>
            <person name="Yamashita R."/>
            <person name="Nakai K."/>
            <person name="Yada T."/>
            <person name="Nakamura Y."/>
            <person name="Ohara O."/>
            <person name="Isogai T."/>
            <person name="Sugano S."/>
        </authorList>
    </citation>
    <scope>NUCLEOTIDE SEQUENCE [LARGE SCALE MRNA] (ISOFORMS 1 AND 2)</scope>
    <source>
        <tissue>Mesangial cell</tissue>
        <tissue>Tongue</tissue>
    </source>
</reference>
<reference key="3">
    <citation type="submission" date="2005-07" db="EMBL/GenBank/DDBJ databases">
        <authorList>
            <person name="Mural R.J."/>
            <person name="Istrail S."/>
            <person name="Sutton G.G."/>
            <person name="Florea L."/>
            <person name="Halpern A.L."/>
            <person name="Mobarry C.M."/>
            <person name="Lippert R."/>
            <person name="Walenz B."/>
            <person name="Shatkay H."/>
            <person name="Dew I."/>
            <person name="Miller J.R."/>
            <person name="Flanigan M.J."/>
            <person name="Edwards N.J."/>
            <person name="Bolanos R."/>
            <person name="Fasulo D."/>
            <person name="Halldorsson B.V."/>
            <person name="Hannenhalli S."/>
            <person name="Turner R."/>
            <person name="Yooseph S."/>
            <person name="Lu F."/>
            <person name="Nusskern D.R."/>
            <person name="Shue B.C."/>
            <person name="Zheng X.H."/>
            <person name="Zhong F."/>
            <person name="Delcher A.L."/>
            <person name="Huson D.H."/>
            <person name="Kravitz S.A."/>
            <person name="Mouchard L."/>
            <person name="Reinert K."/>
            <person name="Remington K.A."/>
            <person name="Clark A.G."/>
            <person name="Waterman M.S."/>
            <person name="Eichler E.E."/>
            <person name="Adams M.D."/>
            <person name="Hunkapiller M.W."/>
            <person name="Myers E.W."/>
            <person name="Venter J.C."/>
        </authorList>
    </citation>
    <scope>NUCLEOTIDE SEQUENCE [LARGE SCALE GENOMIC DNA]</scope>
</reference>
<reference key="4">
    <citation type="journal article" date="2004" name="Genome Res.">
        <title>The status, quality, and expansion of the NIH full-length cDNA project: the Mammalian Gene Collection (MGC).</title>
        <authorList>
            <consortium name="The MGC Project Team"/>
        </authorList>
    </citation>
    <scope>NUCLEOTIDE SEQUENCE [LARGE SCALE MRNA] (ISOFORM 1)</scope>
    <source>
        <tissue>Placenta</tissue>
    </source>
</reference>
<reference key="5">
    <citation type="journal article" date="2003" name="J. Cell Biol.">
        <title>Processing by proprotein convertases is required for glypican-3 modulation of cell survival, Wnt signaling, and gastrulation movements.</title>
        <authorList>
            <person name="De Cat B."/>
            <person name="Muyldermans S.Y."/>
            <person name="Coomans C."/>
            <person name="Degeest G."/>
            <person name="Vanderschueren B."/>
            <person name="Creemers J."/>
            <person name="Biemar F."/>
            <person name="Peers B."/>
            <person name="David G."/>
        </authorList>
    </citation>
    <scope>INTERACTION WITH GPC3</scope>
</reference>
<reference key="6">
    <citation type="journal article" date="2005" name="Oncogene">
        <title>Wnt-5a has tumor suppressor activity in thyroid carcinoma.</title>
        <authorList>
            <person name="Kremenevskaja N."/>
            <person name="von Wasielewski R."/>
            <person name="Rao A.S."/>
            <person name="Schoefl C."/>
            <person name="Andersson T."/>
            <person name="Brabant G."/>
        </authorList>
    </citation>
    <scope>FUNCTION</scope>
    <scope>TISSUE SPECIFICITY</scope>
</reference>
<reference key="7">
    <citation type="journal article" date="2007" name="J. Biol. Chem.">
        <title>The Wnt5A/protein kinase C pathway mediates motility in melanoma cells via the inhibition of metastasis suppressors and initiation of an epithelial to mesenchymal transition.</title>
        <authorList>
            <person name="Dissanayake S.K."/>
            <person name="Wade M."/>
            <person name="Johnson C.E."/>
            <person name="O'Connell M.P."/>
            <person name="Leotlela P.D."/>
            <person name="French A.D."/>
            <person name="Shah K.V."/>
            <person name="Hewitt K.J."/>
            <person name="Rosenthal D.T."/>
            <person name="Indig F.E."/>
            <person name="Jiang Y."/>
            <person name="Nickoloff B.J."/>
            <person name="Taub D.D."/>
            <person name="Trent J.M."/>
            <person name="Moon R.T."/>
            <person name="Bittner M."/>
            <person name="Weeraratna A.T."/>
        </authorList>
    </citation>
    <scope>FUNCTION</scope>
</reference>
<reference key="8">
    <citation type="journal article" date="2016" name="Elife">
        <title>Active and water-soluble form of lipidated Wnt protein is maintained by a serum glycoprotein afamin/alpha-albumin.</title>
        <authorList>
            <person name="Mihara E."/>
            <person name="Hirai H."/>
            <person name="Yamamoto H."/>
            <person name="Tamura-Kawakami K."/>
            <person name="Matano M."/>
            <person name="Kikuchi A."/>
            <person name="Sato T."/>
            <person name="Takagi J."/>
        </authorList>
    </citation>
    <scope>INTERACTION WITH AFM</scope>
    <scope>SUBCELLULAR LOCATION</scope>
</reference>
<reference key="9">
    <citation type="journal article" date="2016" name="Nat. Cell Biol.">
        <title>The polycystin complex mediates Wnt/Ca(2+) signalling.</title>
        <authorList>
            <person name="Kim S."/>
            <person name="Nie H."/>
            <person name="Nesin V."/>
            <person name="Tran U."/>
            <person name="Outeda P."/>
            <person name="Bai C.X."/>
            <person name="Keeling J."/>
            <person name="Maskey D."/>
            <person name="Watnick T."/>
            <person name="Wessely O."/>
            <person name="Tsiokas L."/>
        </authorList>
    </citation>
    <scope>INTERACTION WITH PKD1</scope>
</reference>
<reference key="10">
    <citation type="journal article" date="2021" name="Sci. Adv.">
        <title>Structure of the human Meckel-Gruber protein Meckelin.</title>
        <authorList>
            <person name="Liu D."/>
            <person name="Qian D."/>
            <person name="Shen H."/>
            <person name="Gong D."/>
        </authorList>
    </citation>
    <scope>INTERACTION WITH TMEM67</scope>
</reference>
<reference key="11">
    <citation type="journal article" date="2010" name="Dev. Dyn.">
        <title>WNT5A mutations in patients with autosomal dominant Robinow syndrome.</title>
        <authorList>
            <person name="Person A.D."/>
            <person name="Beiraghi S."/>
            <person name="Sieben C.M."/>
            <person name="Hermanson S."/>
            <person name="Neumann A.N."/>
            <person name="Robu M.E."/>
            <person name="Schleiffarth J.R."/>
            <person name="Billington C.J. Jr."/>
            <person name="van Bokhoven H."/>
            <person name="Hoogeboom J.M."/>
            <person name="Mazzeu J.F."/>
            <person name="Petryk A."/>
            <person name="Schimmenti L.A."/>
            <person name="Brunner H.G."/>
            <person name="Ekker S.C."/>
            <person name="Lohr J.L."/>
        </authorList>
    </citation>
    <scope>VARIANTS DRS1 SER-83 AND ARG-182</scope>
    <scope>CHARACTERIZATION OF VARIANTS DRS1 SER-83 AND ARG-182</scope>
</reference>
<reference key="12">
    <citation type="journal article" date="2018" name="Am. J. Hum. Genet.">
        <title>WNT signaling perturbations underlie the genetic heterogeneity of Robinow syndrome.</title>
        <authorList>
            <consortium name="Baylor-Hopkins Center for Mendelian Genomics"/>
            <person name="White J.J."/>
            <person name="Mazzeu J.F."/>
            <person name="Coban-Akdemir Z."/>
            <person name="Bayram Y."/>
            <person name="Bahrambeigi V."/>
            <person name="Hoischen A."/>
            <person name="van Bon B.W.M."/>
            <person name="Gezdirici A."/>
            <person name="Gulec E.Y."/>
            <person name="Ramond F."/>
            <person name="Touraine R."/>
            <person name="Thevenon J."/>
            <person name="Shinawi M."/>
            <person name="Beaver E."/>
            <person name="Heeley J."/>
            <person name="Hoover-Fong J."/>
            <person name="Durmaz C.D."/>
            <person name="Karabulut H.G."/>
            <person name="Marzioglu-Ozdemir E."/>
            <person name="Cayir A."/>
            <person name="Duz M.B."/>
            <person name="Seven M."/>
            <person name="Price S."/>
            <person name="Ferreira B.M."/>
            <person name="Vianna-Morgante A.M."/>
            <person name="Ellard S."/>
            <person name="Parrish A."/>
            <person name="Stals K."/>
            <person name="Flores-Daboub J."/>
            <person name="Jhangiani S.N."/>
            <person name="Gibbs R.A."/>
            <person name="Brunner H.G."/>
            <person name="Sutton V.R."/>
            <person name="Lupski J.R."/>
            <person name="Carvalho C.M.B."/>
        </authorList>
    </citation>
    <scope>VARIANTS DRS1 CYS-160 AND GLY-CYS-164 INS</scope>
</reference>
<dbReference type="EMBL" id="L20861">
    <property type="protein sequence ID" value="AAA16842.1"/>
    <property type="molecule type" value="mRNA"/>
</dbReference>
<dbReference type="EMBL" id="AK290375">
    <property type="protein sequence ID" value="BAF83064.1"/>
    <property type="molecule type" value="mRNA"/>
</dbReference>
<dbReference type="EMBL" id="AK290869">
    <property type="protein sequence ID" value="BAF83558.1"/>
    <property type="molecule type" value="mRNA"/>
</dbReference>
<dbReference type="EMBL" id="CH471055">
    <property type="protein sequence ID" value="EAW65310.1"/>
    <property type="molecule type" value="Genomic_DNA"/>
</dbReference>
<dbReference type="EMBL" id="BC064694">
    <property type="protein sequence ID" value="AAH64694.1"/>
    <property type="molecule type" value="mRNA"/>
</dbReference>
<dbReference type="CCDS" id="CCDS46850.1">
    <molecule id="P41221-1"/>
</dbReference>
<dbReference type="CCDS" id="CCDS58835.1">
    <molecule id="P41221-2"/>
</dbReference>
<dbReference type="PIR" id="A48914">
    <property type="entry name" value="A48914"/>
</dbReference>
<dbReference type="RefSeq" id="NP_001243034.1">
    <molecule id="P41221-2"/>
    <property type="nucleotide sequence ID" value="NM_001256105.1"/>
</dbReference>
<dbReference type="RefSeq" id="NP_001364200.1">
    <molecule id="P41221-2"/>
    <property type="nucleotide sequence ID" value="NM_001377271.1"/>
</dbReference>
<dbReference type="RefSeq" id="NP_001364201.1">
    <molecule id="P41221-2"/>
    <property type="nucleotide sequence ID" value="NM_001377272.1"/>
</dbReference>
<dbReference type="RefSeq" id="NP_003383.2">
    <molecule id="P41221-1"/>
    <property type="nucleotide sequence ID" value="NM_003392.4"/>
</dbReference>
<dbReference type="RefSeq" id="XP_006713387.1">
    <property type="nucleotide sequence ID" value="XM_006713324.1"/>
</dbReference>
<dbReference type="RefSeq" id="XP_011532387.1">
    <property type="nucleotide sequence ID" value="XM_011534085.2"/>
</dbReference>
<dbReference type="RefSeq" id="XP_011532388.1">
    <molecule id="P41221-2"/>
    <property type="nucleotide sequence ID" value="XM_011534086.3"/>
</dbReference>
<dbReference type="RefSeq" id="XP_011532389.1">
    <property type="nucleotide sequence ID" value="XM_011534087.2"/>
</dbReference>
<dbReference type="RefSeq" id="XP_011532390.1">
    <molecule id="P41221-2"/>
    <property type="nucleotide sequence ID" value="XM_011534088.3"/>
</dbReference>
<dbReference type="RefSeq" id="XP_011532391.1">
    <molecule id="P41221-2"/>
    <property type="nucleotide sequence ID" value="XM_011534089.2"/>
</dbReference>
<dbReference type="RefSeq" id="XP_016862617.1">
    <molecule id="P41221-2"/>
    <property type="nucleotide sequence ID" value="XM_017007128.2"/>
</dbReference>
<dbReference type="RefSeq" id="XP_047304808.1">
    <molecule id="P41221-2"/>
    <property type="nucleotide sequence ID" value="XM_047448852.1"/>
</dbReference>
<dbReference type="RefSeq" id="XP_047304809.1">
    <molecule id="P41221-2"/>
    <property type="nucleotide sequence ID" value="XM_047448853.1"/>
</dbReference>
<dbReference type="RefSeq" id="XP_047304810.1">
    <molecule id="P41221-2"/>
    <property type="nucleotide sequence ID" value="XM_047448854.1"/>
</dbReference>
<dbReference type="RefSeq" id="XP_047304811.1">
    <molecule id="P41221-2"/>
    <property type="nucleotide sequence ID" value="XM_047448855.1"/>
</dbReference>
<dbReference type="RefSeq" id="XP_047304812.1">
    <molecule id="P41221-2"/>
    <property type="nucleotide sequence ID" value="XM_047448856.1"/>
</dbReference>
<dbReference type="RefSeq" id="XP_047304813.1">
    <molecule id="P41221-2"/>
    <property type="nucleotide sequence ID" value="XM_047448857.1"/>
</dbReference>
<dbReference type="RefSeq" id="XP_047304814.1">
    <molecule id="P41221-2"/>
    <property type="nucleotide sequence ID" value="XM_047448858.1"/>
</dbReference>
<dbReference type="RefSeq" id="XP_047304815.1">
    <molecule id="P41221-2"/>
    <property type="nucleotide sequence ID" value="XM_047448859.1"/>
</dbReference>
<dbReference type="RefSeq" id="XP_047304816.1">
    <molecule id="P41221-2"/>
    <property type="nucleotide sequence ID" value="XM_047448860.1"/>
</dbReference>
<dbReference type="RefSeq" id="XP_047304817.1">
    <molecule id="P41221-2"/>
    <property type="nucleotide sequence ID" value="XM_047448861.1"/>
</dbReference>
<dbReference type="RefSeq" id="XP_047304818.1">
    <molecule id="P41221-2"/>
    <property type="nucleotide sequence ID" value="XM_047448862.1"/>
</dbReference>
<dbReference type="RefSeq" id="XP_054203725.1">
    <molecule id="P41221-2"/>
    <property type="nucleotide sequence ID" value="XM_054347750.1"/>
</dbReference>
<dbReference type="RefSeq" id="XP_054203727.1">
    <molecule id="P41221-2"/>
    <property type="nucleotide sequence ID" value="XM_054347752.1"/>
</dbReference>
<dbReference type="RefSeq" id="XP_054203728.1">
    <molecule id="P41221-2"/>
    <property type="nucleotide sequence ID" value="XM_054347753.1"/>
</dbReference>
<dbReference type="RefSeq" id="XP_054203729.1">
    <molecule id="P41221-2"/>
    <property type="nucleotide sequence ID" value="XM_054347754.1"/>
</dbReference>
<dbReference type="RefSeq" id="XP_054203730.1">
    <molecule id="P41221-2"/>
    <property type="nucleotide sequence ID" value="XM_054347755.1"/>
</dbReference>
<dbReference type="RefSeq" id="XP_054203731.1">
    <molecule id="P41221-2"/>
    <property type="nucleotide sequence ID" value="XM_054347756.1"/>
</dbReference>
<dbReference type="RefSeq" id="XP_054203732.1">
    <molecule id="P41221-2"/>
    <property type="nucleotide sequence ID" value="XM_054347757.1"/>
</dbReference>
<dbReference type="RefSeq" id="XP_054203733.1">
    <molecule id="P41221-2"/>
    <property type="nucleotide sequence ID" value="XM_054347758.1"/>
</dbReference>
<dbReference type="SMR" id="P41221"/>
<dbReference type="BioGRID" id="113311">
    <property type="interactions" value="69"/>
</dbReference>
<dbReference type="DIP" id="DIP-29735N"/>
<dbReference type="FunCoup" id="P41221">
    <property type="interactions" value="538"/>
</dbReference>
<dbReference type="IntAct" id="P41221">
    <property type="interactions" value="59"/>
</dbReference>
<dbReference type="MINT" id="P41221"/>
<dbReference type="STRING" id="9606.ENSP00000264634"/>
<dbReference type="GlyConnect" id="1672">
    <property type="glycosylation" value="2 N-Linked glycans (1 site)"/>
</dbReference>
<dbReference type="GlyCosmos" id="P41221">
    <property type="glycosylation" value="4 sites, 2 glycans"/>
</dbReference>
<dbReference type="GlyGen" id="P41221">
    <property type="glycosylation" value="6 sites, 10 N-linked glycans (4 sites), 1 O-linked glycan (1 site)"/>
</dbReference>
<dbReference type="iPTMnet" id="P41221"/>
<dbReference type="PhosphoSitePlus" id="P41221"/>
<dbReference type="BioMuta" id="WNT5A"/>
<dbReference type="DMDM" id="212276478"/>
<dbReference type="jPOST" id="P41221"/>
<dbReference type="MassIVE" id="P41221"/>
<dbReference type="PaxDb" id="9606-ENSP00000264634"/>
<dbReference type="PeptideAtlas" id="P41221"/>
<dbReference type="ProteomicsDB" id="55429">
    <molecule id="P41221-1"/>
</dbReference>
<dbReference type="ProteomicsDB" id="55430">
    <molecule id="P41221-2"/>
</dbReference>
<dbReference type="Pumba" id="P41221"/>
<dbReference type="Antibodypedia" id="31456">
    <property type="antibodies" value="564 antibodies from 41 providers"/>
</dbReference>
<dbReference type="DNASU" id="7474"/>
<dbReference type="Ensembl" id="ENST00000264634.9">
    <molecule id="P41221-1"/>
    <property type="protein sequence ID" value="ENSP00000264634.4"/>
    <property type="gene ID" value="ENSG00000114251.15"/>
</dbReference>
<dbReference type="Ensembl" id="ENST00000474267.5">
    <molecule id="P41221-1"/>
    <property type="protein sequence ID" value="ENSP00000417310.1"/>
    <property type="gene ID" value="ENSG00000114251.15"/>
</dbReference>
<dbReference type="Ensembl" id="ENST00000497027.5">
    <molecule id="P41221-2"/>
    <property type="protein sequence ID" value="ENSP00000420104.1"/>
    <property type="gene ID" value="ENSG00000114251.15"/>
</dbReference>
<dbReference type="GeneID" id="7474"/>
<dbReference type="KEGG" id="hsa:7474"/>
<dbReference type="MANE-Select" id="ENST00000264634.9">
    <property type="protein sequence ID" value="ENSP00000264634.4"/>
    <property type="RefSeq nucleotide sequence ID" value="NM_003392.7"/>
    <property type="RefSeq protein sequence ID" value="NP_003383.4"/>
</dbReference>
<dbReference type="UCSC" id="uc003dhn.5">
    <molecule id="P41221-1"/>
    <property type="organism name" value="human"/>
</dbReference>
<dbReference type="AGR" id="HGNC:12784"/>
<dbReference type="CTD" id="7474"/>
<dbReference type="DisGeNET" id="7474"/>
<dbReference type="GeneCards" id="WNT5A"/>
<dbReference type="GeneReviews" id="WNT5A"/>
<dbReference type="HGNC" id="HGNC:12784">
    <property type="gene designation" value="WNT5A"/>
</dbReference>
<dbReference type="HPA" id="ENSG00000114251">
    <property type="expression patterns" value="Tissue enhanced (endometrium, salivary gland)"/>
</dbReference>
<dbReference type="MalaCards" id="WNT5A"/>
<dbReference type="MIM" id="164975">
    <property type="type" value="gene"/>
</dbReference>
<dbReference type="MIM" id="180700">
    <property type="type" value="phenotype"/>
</dbReference>
<dbReference type="neXtProt" id="NX_P41221"/>
<dbReference type="OpenTargets" id="ENSG00000114251"/>
<dbReference type="Orphanet" id="3107">
    <property type="disease" value="Autosomal dominant Robinow syndrome"/>
</dbReference>
<dbReference type="PharmGKB" id="PA37385"/>
<dbReference type="VEuPathDB" id="HostDB:ENSG00000114251"/>
<dbReference type="eggNOG" id="KOG3913">
    <property type="taxonomic scope" value="Eukaryota"/>
</dbReference>
<dbReference type="GeneTree" id="ENSGT00940000158894"/>
<dbReference type="HOGENOM" id="CLU_033039_0_1_1"/>
<dbReference type="InParanoid" id="P41221"/>
<dbReference type="OMA" id="ELNSCGC"/>
<dbReference type="OrthoDB" id="5945655at2759"/>
<dbReference type="PAN-GO" id="P41221">
    <property type="GO annotations" value="6 GO annotations based on evolutionary models"/>
</dbReference>
<dbReference type="PhylomeDB" id="P41221"/>
<dbReference type="TreeFam" id="TF105310"/>
<dbReference type="PathwayCommons" id="P41221"/>
<dbReference type="Reactome" id="R-HSA-201681">
    <property type="pathway name" value="TCF dependent signaling in response to WNT"/>
</dbReference>
<dbReference type="Reactome" id="R-HSA-3238698">
    <property type="pathway name" value="WNT ligand biogenesis and trafficking"/>
</dbReference>
<dbReference type="Reactome" id="R-HSA-373080">
    <property type="pathway name" value="Class B/2 (Secretin family receptors)"/>
</dbReference>
<dbReference type="Reactome" id="R-HSA-3772470">
    <property type="pathway name" value="Negative regulation of TCF-dependent signaling by WNT ligand antagonists"/>
</dbReference>
<dbReference type="Reactome" id="R-HSA-4086398">
    <property type="pathway name" value="Ca2+ pathway"/>
</dbReference>
<dbReference type="Reactome" id="R-HSA-4086400">
    <property type="pathway name" value="PCP/CE pathway"/>
</dbReference>
<dbReference type="Reactome" id="R-HSA-4608870">
    <property type="pathway name" value="Asymmetric localization of PCP proteins"/>
</dbReference>
<dbReference type="Reactome" id="R-HSA-5099900">
    <property type="pathway name" value="WNT5A-dependent internalization of FZD4"/>
</dbReference>
<dbReference type="Reactome" id="R-HSA-5140745">
    <property type="pathway name" value="WNT5A-dependent internalization of FZD2, FZD5 and ROR2"/>
</dbReference>
<dbReference type="Reactome" id="R-HSA-8856825">
    <property type="pathway name" value="Cargo recognition for clathrin-mediated endocytosis"/>
</dbReference>
<dbReference type="Reactome" id="R-HSA-8856828">
    <property type="pathway name" value="Clathrin-mediated endocytosis"/>
</dbReference>
<dbReference type="Reactome" id="R-HSA-9673324">
    <property type="pathway name" value="WNT5:FZD7-mediated leishmania damping"/>
</dbReference>
<dbReference type="SignaLink" id="P41221"/>
<dbReference type="SIGNOR" id="P41221"/>
<dbReference type="BioGRID-ORCS" id="7474">
    <property type="hits" value="10 hits in 1145 CRISPR screens"/>
</dbReference>
<dbReference type="ChiTaRS" id="WNT5A">
    <property type="organism name" value="human"/>
</dbReference>
<dbReference type="GeneWiki" id="WNT5A"/>
<dbReference type="GenomeRNAi" id="7474"/>
<dbReference type="Pharos" id="P41221">
    <property type="development level" value="Tbio"/>
</dbReference>
<dbReference type="PRO" id="PR:P41221"/>
<dbReference type="Proteomes" id="UP000005640">
    <property type="component" value="Chromosome 3"/>
</dbReference>
<dbReference type="RNAct" id="P41221">
    <property type="molecule type" value="protein"/>
</dbReference>
<dbReference type="Bgee" id="ENSG00000114251">
    <property type="expression patterns" value="Expressed in stromal cell of endometrium and 180 other cell types or tissues"/>
</dbReference>
<dbReference type="ExpressionAtlas" id="P41221">
    <property type="expression patterns" value="baseline and differential"/>
</dbReference>
<dbReference type="GO" id="GO:0009986">
    <property type="term" value="C:cell surface"/>
    <property type="evidence" value="ECO:0007669"/>
    <property type="project" value="Ensembl"/>
</dbReference>
<dbReference type="GO" id="GO:0030669">
    <property type="term" value="C:clathrin-coated endocytic vesicle membrane"/>
    <property type="evidence" value="ECO:0000304"/>
    <property type="project" value="Reactome"/>
</dbReference>
<dbReference type="GO" id="GO:0030666">
    <property type="term" value="C:endocytic vesicle membrane"/>
    <property type="evidence" value="ECO:0000304"/>
    <property type="project" value="Reactome"/>
</dbReference>
<dbReference type="GO" id="GO:0005788">
    <property type="term" value="C:endoplasmic reticulum lumen"/>
    <property type="evidence" value="ECO:0000304"/>
    <property type="project" value="Reactome"/>
</dbReference>
<dbReference type="GO" id="GO:0070062">
    <property type="term" value="C:extracellular exosome"/>
    <property type="evidence" value="ECO:0000304"/>
    <property type="project" value="Reactome"/>
</dbReference>
<dbReference type="GO" id="GO:0031012">
    <property type="term" value="C:extracellular matrix"/>
    <property type="evidence" value="ECO:0007669"/>
    <property type="project" value="Ensembl"/>
</dbReference>
<dbReference type="GO" id="GO:0005576">
    <property type="term" value="C:extracellular region"/>
    <property type="evidence" value="ECO:0000304"/>
    <property type="project" value="ARUK-UCL"/>
</dbReference>
<dbReference type="GO" id="GO:0005615">
    <property type="term" value="C:extracellular space"/>
    <property type="evidence" value="ECO:0000314"/>
    <property type="project" value="UniProtKB"/>
</dbReference>
<dbReference type="GO" id="GO:0098978">
    <property type="term" value="C:glutamatergic synapse"/>
    <property type="evidence" value="ECO:0000314"/>
    <property type="project" value="SynGO"/>
</dbReference>
<dbReference type="GO" id="GO:0005796">
    <property type="term" value="C:Golgi lumen"/>
    <property type="evidence" value="ECO:0000304"/>
    <property type="project" value="Reactome"/>
</dbReference>
<dbReference type="GO" id="GO:0005886">
    <property type="term" value="C:plasma membrane"/>
    <property type="evidence" value="ECO:0000304"/>
    <property type="project" value="Reactome"/>
</dbReference>
<dbReference type="GO" id="GO:0098794">
    <property type="term" value="C:postsynapse"/>
    <property type="evidence" value="ECO:0007669"/>
    <property type="project" value="GOC"/>
</dbReference>
<dbReference type="GO" id="GO:0098685">
    <property type="term" value="C:Schaffer collateral - CA1 synapse"/>
    <property type="evidence" value="ECO:0007669"/>
    <property type="project" value="Ensembl"/>
</dbReference>
<dbReference type="GO" id="GO:1902379">
    <property type="term" value="F:chemoattractant activity involved in axon guidance"/>
    <property type="evidence" value="ECO:0007669"/>
    <property type="project" value="Ensembl"/>
</dbReference>
<dbReference type="GO" id="GO:0005125">
    <property type="term" value="F:cytokine activity"/>
    <property type="evidence" value="ECO:0000318"/>
    <property type="project" value="GO_Central"/>
</dbReference>
<dbReference type="GO" id="GO:0005109">
    <property type="term" value="F:frizzled binding"/>
    <property type="evidence" value="ECO:0000353"/>
    <property type="project" value="UniProtKB"/>
</dbReference>
<dbReference type="GO" id="GO:0005543">
    <property type="term" value="F:phospholipid binding"/>
    <property type="evidence" value="ECO:0000304"/>
    <property type="project" value="ARUK-UCL"/>
</dbReference>
<dbReference type="GO" id="GO:0019904">
    <property type="term" value="F:protein domain specific binding"/>
    <property type="evidence" value="ECO:0007669"/>
    <property type="project" value="Ensembl"/>
</dbReference>
<dbReference type="GO" id="GO:0048018">
    <property type="term" value="F:receptor ligand activity"/>
    <property type="evidence" value="ECO:0000305"/>
    <property type="project" value="BHF-UCL"/>
</dbReference>
<dbReference type="GO" id="GO:0005115">
    <property type="term" value="F:receptor tyrosine kinase-like orphan receptor binding"/>
    <property type="evidence" value="ECO:0000353"/>
    <property type="project" value="UniProtKB"/>
</dbReference>
<dbReference type="GO" id="GO:0008595">
    <property type="term" value="P:anterior/posterior axis specification, embryo"/>
    <property type="evidence" value="ECO:0007669"/>
    <property type="project" value="Ensembl"/>
</dbReference>
<dbReference type="GO" id="GO:0003283">
    <property type="term" value="P:atrial septum development"/>
    <property type="evidence" value="ECO:0007669"/>
    <property type="project" value="Ensembl"/>
</dbReference>
<dbReference type="GO" id="GO:0048846">
    <property type="term" value="P:axon extension involved in axon guidance"/>
    <property type="evidence" value="ECO:0007669"/>
    <property type="project" value="Ensembl"/>
</dbReference>
<dbReference type="GO" id="GO:0007411">
    <property type="term" value="P:axon guidance"/>
    <property type="evidence" value="ECO:0000250"/>
    <property type="project" value="UniProtKB"/>
</dbReference>
<dbReference type="GO" id="GO:0030509">
    <property type="term" value="P:BMP signaling pathway"/>
    <property type="evidence" value="ECO:0007669"/>
    <property type="project" value="Ensembl"/>
</dbReference>
<dbReference type="GO" id="GO:0060070">
    <property type="term" value="P:canonical Wnt signaling pathway"/>
    <property type="evidence" value="ECO:0000318"/>
    <property type="project" value="GO_Central"/>
</dbReference>
<dbReference type="GO" id="GO:0051216">
    <property type="term" value="P:cartilage development"/>
    <property type="evidence" value="ECO:0007669"/>
    <property type="project" value="UniProtKB-KW"/>
</dbReference>
<dbReference type="GO" id="GO:0045165">
    <property type="term" value="P:cell fate commitment"/>
    <property type="evidence" value="ECO:0000318"/>
    <property type="project" value="GO_Central"/>
</dbReference>
<dbReference type="GO" id="GO:0071277">
    <property type="term" value="P:cellular response to calcium ion"/>
    <property type="evidence" value="ECO:0000270"/>
    <property type="project" value="UniProtKB"/>
</dbReference>
<dbReference type="GO" id="GO:0071222">
    <property type="term" value="P:cellular response to lipopolysaccharide"/>
    <property type="evidence" value="ECO:0000270"/>
    <property type="project" value="UniProtKB"/>
</dbReference>
<dbReference type="GO" id="GO:0071300">
    <property type="term" value="P:cellular response to retinoic acid"/>
    <property type="evidence" value="ECO:0000250"/>
    <property type="project" value="UniProtKB"/>
</dbReference>
<dbReference type="GO" id="GO:0071560">
    <property type="term" value="P:cellular response to transforming growth factor beta stimulus"/>
    <property type="evidence" value="ECO:0000270"/>
    <property type="project" value="UniProtKB"/>
</dbReference>
<dbReference type="GO" id="GO:0071346">
    <property type="term" value="P:cellular response to type II interferon"/>
    <property type="evidence" value="ECO:0000270"/>
    <property type="project" value="UniProtKB"/>
</dbReference>
<dbReference type="GO" id="GO:0060067">
    <property type="term" value="P:cervix development"/>
    <property type="evidence" value="ECO:0007669"/>
    <property type="project" value="Ensembl"/>
</dbReference>
<dbReference type="GO" id="GO:0036517">
    <property type="term" value="P:chemoattraction of serotonergic neuron axon"/>
    <property type="evidence" value="ECO:0000250"/>
    <property type="project" value="ParkinsonsUK-UCL"/>
</dbReference>
<dbReference type="GO" id="GO:0036518">
    <property type="term" value="P:chemorepulsion of dopaminergic neuron axon"/>
    <property type="evidence" value="ECO:0000250"/>
    <property type="project" value="ParkinsonsUK-UCL"/>
</dbReference>
<dbReference type="GO" id="GO:0090103">
    <property type="term" value="P:cochlea morphogenesis"/>
    <property type="evidence" value="ECO:0007669"/>
    <property type="project" value="Ensembl"/>
</dbReference>
<dbReference type="GO" id="GO:0060028">
    <property type="term" value="P:convergent extension involved in axis elongation"/>
    <property type="evidence" value="ECO:0007669"/>
    <property type="project" value="Ensembl"/>
</dbReference>
<dbReference type="GO" id="GO:0060029">
    <property type="term" value="P:convergent extension involved in organogenesis"/>
    <property type="evidence" value="ECO:0007669"/>
    <property type="project" value="Ensembl"/>
</dbReference>
<dbReference type="GO" id="GO:0042733">
    <property type="term" value="P:embryonic digit morphogenesis"/>
    <property type="evidence" value="ECO:0007669"/>
    <property type="project" value="Ensembl"/>
</dbReference>
<dbReference type="GO" id="GO:0048706">
    <property type="term" value="P:embryonic skeletal system development"/>
    <property type="evidence" value="ECO:0000315"/>
    <property type="project" value="BHF-UCL"/>
</dbReference>
<dbReference type="GO" id="GO:0010631">
    <property type="term" value="P:epithelial cell migration"/>
    <property type="evidence" value="ECO:0007669"/>
    <property type="project" value="Ensembl"/>
</dbReference>
<dbReference type="GO" id="GO:0060750">
    <property type="term" value="P:epithelial cell proliferation involved in mammary gland duct elongation"/>
    <property type="evidence" value="ECO:0007669"/>
    <property type="project" value="Ensembl"/>
</dbReference>
<dbReference type="GO" id="GO:0001837">
    <property type="term" value="P:epithelial to mesenchymal transition"/>
    <property type="evidence" value="ECO:0000270"/>
    <property type="project" value="UniProtKB"/>
</dbReference>
<dbReference type="GO" id="GO:0045198">
    <property type="term" value="P:establishment of epithelial cell apical/basal polarity"/>
    <property type="evidence" value="ECO:0007669"/>
    <property type="project" value="Ensembl"/>
</dbReference>
<dbReference type="GO" id="GO:0001736">
    <property type="term" value="P:establishment of planar polarity"/>
    <property type="evidence" value="ECO:0007669"/>
    <property type="project" value="Ensembl"/>
</dbReference>
<dbReference type="GO" id="GO:1904861">
    <property type="term" value="P:excitatory synapse assembly"/>
    <property type="evidence" value="ECO:0000304"/>
    <property type="project" value="ParkinsonsUK-UCL"/>
</dbReference>
<dbReference type="GO" id="GO:0060324">
    <property type="term" value="P:face development"/>
    <property type="evidence" value="ECO:0000315"/>
    <property type="project" value="BHF-UCL"/>
</dbReference>
<dbReference type="GO" id="GO:0008543">
    <property type="term" value="P:fibroblast growth factor receptor signaling pathway"/>
    <property type="evidence" value="ECO:0007669"/>
    <property type="project" value="Ensembl"/>
</dbReference>
<dbReference type="GO" id="GO:0048806">
    <property type="term" value="P:genitalia development"/>
    <property type="evidence" value="ECO:0000315"/>
    <property type="project" value="BHF-UCL"/>
</dbReference>
<dbReference type="GO" id="GO:0001947">
    <property type="term" value="P:heart looping"/>
    <property type="evidence" value="ECO:0007669"/>
    <property type="project" value="Ensembl"/>
</dbReference>
<dbReference type="GO" id="GO:0071425">
    <property type="term" value="P:hematopoietic stem cell proliferation"/>
    <property type="evidence" value="ECO:0000314"/>
    <property type="project" value="BHF-UCL"/>
</dbReference>
<dbReference type="GO" id="GO:0007442">
    <property type="term" value="P:hindgut morphogenesis"/>
    <property type="evidence" value="ECO:0007669"/>
    <property type="project" value="Ensembl"/>
</dbReference>
<dbReference type="GO" id="GO:0048850">
    <property type="term" value="P:hypophysis morphogenesis"/>
    <property type="evidence" value="ECO:0007669"/>
    <property type="project" value="Ensembl"/>
</dbReference>
<dbReference type="GO" id="GO:0006954">
    <property type="term" value="P:inflammatory response"/>
    <property type="evidence" value="ECO:0000315"/>
    <property type="project" value="BHF-UCL"/>
</dbReference>
<dbReference type="GO" id="GO:1904862">
    <property type="term" value="P:inhibitory synapse assembly"/>
    <property type="evidence" value="ECO:0000304"/>
    <property type="project" value="ParkinsonsUK-UCL"/>
</dbReference>
<dbReference type="GO" id="GO:0007254">
    <property type="term" value="P:JNK cascade"/>
    <property type="evidence" value="ECO:0007669"/>
    <property type="project" value="Ensembl"/>
</dbReference>
<dbReference type="GO" id="GO:0030216">
    <property type="term" value="P:keratinocyte differentiation"/>
    <property type="evidence" value="ECO:0000270"/>
    <property type="project" value="BHF-UCL"/>
</dbReference>
<dbReference type="GO" id="GO:0001822">
    <property type="term" value="P:kidney development"/>
    <property type="evidence" value="ECO:0007669"/>
    <property type="project" value="Ensembl"/>
</dbReference>
<dbReference type="GO" id="GO:0060599">
    <property type="term" value="P:lateral sprouting involved in mammary gland duct morphogenesis"/>
    <property type="evidence" value="ECO:0007669"/>
    <property type="project" value="Ensembl"/>
</dbReference>
<dbReference type="GO" id="GO:0002088">
    <property type="term" value="P:lens development in camera-type eye"/>
    <property type="evidence" value="ECO:0000250"/>
    <property type="project" value="BHF-UCL"/>
</dbReference>
<dbReference type="GO" id="GO:0030324">
    <property type="term" value="P:lung development"/>
    <property type="evidence" value="ECO:0007669"/>
    <property type="project" value="Ensembl"/>
</dbReference>
<dbReference type="GO" id="GO:0010742">
    <property type="term" value="P:macrophage derived foam cell differentiation"/>
    <property type="evidence" value="ECO:0000315"/>
    <property type="project" value="BHF-UCL"/>
</dbReference>
<dbReference type="GO" id="GO:0008584">
    <property type="term" value="P:male gonad development"/>
    <property type="evidence" value="ECO:0000270"/>
    <property type="project" value="UniProtKB"/>
</dbReference>
<dbReference type="GO" id="GO:0060744">
    <property type="term" value="P:mammary gland branching involved in thelarche"/>
    <property type="evidence" value="ECO:0007669"/>
    <property type="project" value="Ensembl"/>
</dbReference>
<dbReference type="GO" id="GO:0140013">
    <property type="term" value="P:meiotic nuclear division"/>
    <property type="evidence" value="ECO:0007669"/>
    <property type="project" value="Ensembl"/>
</dbReference>
<dbReference type="GO" id="GO:0097325">
    <property type="term" value="P:melanocyte proliferation"/>
    <property type="evidence" value="ECO:0007669"/>
    <property type="project" value="Ensembl"/>
</dbReference>
<dbReference type="GO" id="GO:0010463">
    <property type="term" value="P:mesenchymal cell proliferation"/>
    <property type="evidence" value="ECO:0007669"/>
    <property type="project" value="Ensembl"/>
</dbReference>
<dbReference type="GO" id="GO:0060638">
    <property type="term" value="P:mesenchymal-epithelial cell signaling"/>
    <property type="evidence" value="ECO:0007669"/>
    <property type="project" value="Ensembl"/>
</dbReference>
<dbReference type="GO" id="GO:0060809">
    <property type="term" value="P:mesodermal to mesenchymal transition involved in gastrulation"/>
    <property type="evidence" value="ECO:0007669"/>
    <property type="project" value="Ensembl"/>
</dbReference>
<dbReference type="GO" id="GO:1904948">
    <property type="term" value="P:midbrain dopaminergic neuron differentiation"/>
    <property type="evidence" value="ECO:0000304"/>
    <property type="project" value="ParkinsonsUK-UCL"/>
</dbReference>
<dbReference type="GO" id="GO:0007494">
    <property type="term" value="P:midgut development"/>
    <property type="evidence" value="ECO:0007669"/>
    <property type="project" value="Ensembl"/>
</dbReference>
<dbReference type="GO" id="GO:0043066">
    <property type="term" value="P:negative regulation of apoptotic process"/>
    <property type="evidence" value="ECO:0000314"/>
    <property type="project" value="UniProtKB"/>
</dbReference>
<dbReference type="GO" id="GO:0048843">
    <property type="term" value="P:negative regulation of axon extension involved in axon guidance"/>
    <property type="evidence" value="ECO:0007669"/>
    <property type="project" value="Ensembl"/>
</dbReference>
<dbReference type="GO" id="GO:0030514">
    <property type="term" value="P:negative regulation of BMP signaling pathway"/>
    <property type="evidence" value="ECO:0007669"/>
    <property type="project" value="Ensembl"/>
</dbReference>
<dbReference type="GO" id="GO:0090090">
    <property type="term" value="P:negative regulation of canonical Wnt signaling pathway"/>
    <property type="evidence" value="ECO:0000316"/>
    <property type="project" value="MGI"/>
</dbReference>
<dbReference type="GO" id="GO:1904934">
    <property type="term" value="P:negative regulation of cell proliferation in midbrain"/>
    <property type="evidence" value="ECO:0000303"/>
    <property type="project" value="ParkinsonsUK-UCL"/>
</dbReference>
<dbReference type="GO" id="GO:0045892">
    <property type="term" value="P:negative regulation of DNA-templated transcription"/>
    <property type="evidence" value="ECO:0000314"/>
    <property type="project" value="UniProtKB"/>
</dbReference>
<dbReference type="GO" id="GO:0050680">
    <property type="term" value="P:negative regulation of epithelial cell proliferation"/>
    <property type="evidence" value="ECO:0007669"/>
    <property type="project" value="Ensembl"/>
</dbReference>
<dbReference type="GO" id="GO:0045599">
    <property type="term" value="P:negative regulation of fat cell differentiation"/>
    <property type="evidence" value="ECO:0000315"/>
    <property type="project" value="BHF-UCL"/>
</dbReference>
<dbReference type="GO" id="GO:0040037">
    <property type="term" value="P:negative regulation of fibroblast growth factor receptor signaling pathway"/>
    <property type="evidence" value="ECO:0007669"/>
    <property type="project" value="Ensembl"/>
</dbReference>
<dbReference type="GO" id="GO:0048022">
    <property type="term" value="P:negative regulation of melanin biosynthetic process"/>
    <property type="evidence" value="ECO:0007669"/>
    <property type="project" value="Ensembl"/>
</dbReference>
<dbReference type="GO" id="GO:0072201">
    <property type="term" value="P:negative regulation of mesenchymal cell proliferation"/>
    <property type="evidence" value="ECO:0000314"/>
    <property type="project" value="UniProtKB"/>
</dbReference>
<dbReference type="GO" id="GO:0060686">
    <property type="term" value="P:negative regulation of prostatic bud formation"/>
    <property type="evidence" value="ECO:0007669"/>
    <property type="project" value="Ensembl"/>
</dbReference>
<dbReference type="GO" id="GO:0051964">
    <property type="term" value="P:negative regulation of synapse assembly"/>
    <property type="evidence" value="ECO:0007669"/>
    <property type="project" value="Ensembl"/>
</dbReference>
<dbReference type="GO" id="GO:0001843">
    <property type="term" value="P:neural tube closure"/>
    <property type="evidence" value="ECO:0007669"/>
    <property type="project" value="Ensembl"/>
</dbReference>
<dbReference type="GO" id="GO:0030182">
    <property type="term" value="P:neuron differentiation"/>
    <property type="evidence" value="ECO:0000250"/>
    <property type="project" value="UniProtKB"/>
</dbReference>
<dbReference type="GO" id="GO:0035567">
    <property type="term" value="P:non-canonical Wnt signaling pathway"/>
    <property type="evidence" value="ECO:0000304"/>
    <property type="project" value="ParkinsonsUK-UCL"/>
</dbReference>
<dbReference type="GO" id="GO:0048570">
    <property type="term" value="P:notochord morphogenesis"/>
    <property type="evidence" value="ECO:0007669"/>
    <property type="project" value="Ensembl"/>
</dbReference>
<dbReference type="GO" id="GO:0021891">
    <property type="term" value="P:olfactory bulb interneuron development"/>
    <property type="evidence" value="ECO:0000250"/>
    <property type="project" value="UniProtKB"/>
</dbReference>
<dbReference type="GO" id="GO:0003408">
    <property type="term" value="P:optic cup formation involved in camera-type eye development"/>
    <property type="evidence" value="ECO:0000250"/>
    <property type="project" value="BHF-UCL"/>
</dbReference>
<dbReference type="GO" id="GO:0048341">
    <property type="term" value="P:paraxial mesoderm formation"/>
    <property type="evidence" value="ECO:0007669"/>
    <property type="project" value="Ensembl"/>
</dbReference>
<dbReference type="GO" id="GO:0003344">
    <property type="term" value="P:pericardium morphogenesis"/>
    <property type="evidence" value="ECO:0007669"/>
    <property type="project" value="Ensembl"/>
</dbReference>
<dbReference type="GO" id="GO:0007200">
    <property type="term" value="P:phospholipase C-activating G protein-coupled receptor signaling pathway"/>
    <property type="evidence" value="ECO:0000315"/>
    <property type="project" value="UniProtKB"/>
</dbReference>
<dbReference type="GO" id="GO:0045766">
    <property type="term" value="P:positive regulation of angiogenesis"/>
    <property type="evidence" value="ECO:0000315"/>
    <property type="project" value="UniProtKB"/>
</dbReference>
<dbReference type="GO" id="GO:2001235">
    <property type="term" value="P:positive regulation of apoptotic signaling pathway"/>
    <property type="evidence" value="ECO:0000250"/>
    <property type="project" value="ARUK-UCL"/>
</dbReference>
<dbReference type="GO" id="GO:0061036">
    <property type="term" value="P:positive regulation of cartilage development"/>
    <property type="evidence" value="ECO:0007669"/>
    <property type="project" value="Ensembl"/>
</dbReference>
<dbReference type="GO" id="GO:2000049">
    <property type="term" value="P:positive regulation of cell-cell adhesion mediated by cadherin"/>
    <property type="evidence" value="ECO:0007669"/>
    <property type="project" value="Ensembl"/>
</dbReference>
<dbReference type="GO" id="GO:0032722">
    <property type="term" value="P:positive regulation of chemokine production"/>
    <property type="evidence" value="ECO:0000315"/>
    <property type="project" value="UniProtKB"/>
</dbReference>
<dbReference type="GO" id="GO:0002720">
    <property type="term" value="P:positive regulation of cytokine production involved in immune response"/>
    <property type="evidence" value="ECO:0000315"/>
    <property type="project" value="UniProtKB"/>
</dbReference>
<dbReference type="GO" id="GO:0045893">
    <property type="term" value="P:positive regulation of DNA-templated transcription"/>
    <property type="evidence" value="ECO:0000315"/>
    <property type="project" value="UniProtKB"/>
</dbReference>
<dbReference type="GO" id="GO:0045807">
    <property type="term" value="P:positive regulation of endocytosis"/>
    <property type="evidence" value="ECO:0007669"/>
    <property type="project" value="Ensembl"/>
</dbReference>
<dbReference type="GO" id="GO:0010595">
    <property type="term" value="P:positive regulation of endothelial cell migration"/>
    <property type="evidence" value="ECO:0000315"/>
    <property type="project" value="UniProtKB"/>
</dbReference>
<dbReference type="GO" id="GO:0001938">
    <property type="term" value="P:positive regulation of endothelial cell proliferation"/>
    <property type="evidence" value="ECO:0000315"/>
    <property type="project" value="UniProtKB"/>
</dbReference>
<dbReference type="GO" id="GO:0048146">
    <property type="term" value="P:positive regulation of fibroblast proliferation"/>
    <property type="evidence" value="ECO:0000314"/>
    <property type="project" value="UniProtKB"/>
</dbReference>
<dbReference type="GO" id="GO:0010628">
    <property type="term" value="P:positive regulation of gene expression"/>
    <property type="evidence" value="ECO:0000250"/>
    <property type="project" value="ARUK-UCL"/>
</dbReference>
<dbReference type="GO" id="GO:1902035">
    <property type="term" value="P:positive regulation of hematopoietic stem cell proliferation"/>
    <property type="evidence" value="ECO:0007669"/>
    <property type="project" value="Ensembl"/>
</dbReference>
<dbReference type="GO" id="GO:0050729">
    <property type="term" value="P:positive regulation of inflammatory response"/>
    <property type="evidence" value="ECO:0000315"/>
    <property type="project" value="BHF-UCL"/>
</dbReference>
<dbReference type="GO" id="GO:0032731">
    <property type="term" value="P:positive regulation of interleukin-1 beta production"/>
    <property type="evidence" value="ECO:0000315"/>
    <property type="project" value="BHF-UCL"/>
</dbReference>
<dbReference type="GO" id="GO:0032755">
    <property type="term" value="P:positive regulation of interleukin-6 production"/>
    <property type="evidence" value="ECO:0000315"/>
    <property type="project" value="BHF-UCL"/>
</dbReference>
<dbReference type="GO" id="GO:0032757">
    <property type="term" value="P:positive regulation of interleukin-8 production"/>
    <property type="evidence" value="ECO:0007669"/>
    <property type="project" value="Ensembl"/>
</dbReference>
<dbReference type="GO" id="GO:0046330">
    <property type="term" value="P:positive regulation of JNK cascade"/>
    <property type="evidence" value="ECO:0000314"/>
    <property type="project" value="BHF-UCL"/>
</dbReference>
<dbReference type="GO" id="GO:0043032">
    <property type="term" value="P:positive regulation of macrophage activation"/>
    <property type="evidence" value="ECO:0000315"/>
    <property type="project" value="BHF-UCL"/>
</dbReference>
<dbReference type="GO" id="GO:0060907">
    <property type="term" value="P:positive regulation of macrophage cytokine production"/>
    <property type="evidence" value="ECO:0000315"/>
    <property type="project" value="UniProtKB"/>
</dbReference>
<dbReference type="GO" id="GO:0043410">
    <property type="term" value="P:positive regulation of MAPK cascade"/>
    <property type="evidence" value="ECO:0000315"/>
    <property type="project" value="BHF-UCL"/>
</dbReference>
<dbReference type="GO" id="GO:0045836">
    <property type="term" value="P:positive regulation of meiotic nuclear division"/>
    <property type="evidence" value="ECO:0007669"/>
    <property type="project" value="Ensembl"/>
</dbReference>
<dbReference type="GO" id="GO:0002053">
    <property type="term" value="P:positive regulation of mesenchymal cell proliferation"/>
    <property type="evidence" value="ECO:0007669"/>
    <property type="project" value="Ensembl"/>
</dbReference>
<dbReference type="GO" id="GO:0150012">
    <property type="term" value="P:positive regulation of neuron projection arborization"/>
    <property type="evidence" value="ECO:0000250"/>
    <property type="project" value="ARUK-UCL"/>
</dbReference>
<dbReference type="GO" id="GO:0010976">
    <property type="term" value="P:positive regulation of neuron projection development"/>
    <property type="evidence" value="ECO:0000250"/>
    <property type="project" value="UniProtKB"/>
</dbReference>
<dbReference type="GO" id="GO:2000052">
    <property type="term" value="P:positive regulation of non-canonical Wnt signaling pathway"/>
    <property type="evidence" value="ECO:0007669"/>
    <property type="project" value="Ensembl"/>
</dbReference>
<dbReference type="GO" id="GO:0045778">
    <property type="term" value="P:positive regulation of ossification"/>
    <property type="evidence" value="ECO:0000315"/>
    <property type="project" value="BHF-UCL"/>
</dbReference>
<dbReference type="GO" id="GO:0051897">
    <property type="term" value="P:positive regulation of phosphatidylinositol 3-kinase/protein kinase B signal transduction"/>
    <property type="evidence" value="ECO:0000314"/>
    <property type="project" value="BHF-UCL"/>
</dbReference>
<dbReference type="GO" id="GO:0045732">
    <property type="term" value="P:positive regulation of protein catabolic process"/>
    <property type="evidence" value="ECO:0000316"/>
    <property type="project" value="MGI"/>
</dbReference>
<dbReference type="GO" id="GO:1900020">
    <property type="term" value="P:positive regulation of protein kinase C activity"/>
    <property type="evidence" value="ECO:0000315"/>
    <property type="project" value="CACAO"/>
</dbReference>
<dbReference type="GO" id="GO:1902474">
    <property type="term" value="P:positive regulation of protein localization to synapse"/>
    <property type="evidence" value="ECO:0000304"/>
    <property type="project" value="ParkinsonsUK-UCL"/>
</dbReference>
<dbReference type="GO" id="GO:0060760">
    <property type="term" value="P:positive regulation of response to cytokine stimulus"/>
    <property type="evidence" value="ECO:0000314"/>
    <property type="project" value="UniProtKB"/>
</dbReference>
<dbReference type="GO" id="GO:0010820">
    <property type="term" value="P:positive regulation of T cell chemotaxis"/>
    <property type="evidence" value="ECO:0000315"/>
    <property type="project" value="UniProtKB"/>
</dbReference>
<dbReference type="GO" id="GO:0070245">
    <property type="term" value="P:positive regulation of thymocyte apoptotic process"/>
    <property type="evidence" value="ECO:0007669"/>
    <property type="project" value="Ensembl"/>
</dbReference>
<dbReference type="GO" id="GO:0051885">
    <property type="term" value="P:positive regulation of timing of anagen"/>
    <property type="evidence" value="ECO:0007669"/>
    <property type="project" value="Ensembl"/>
</dbReference>
<dbReference type="GO" id="GO:0045944">
    <property type="term" value="P:positive regulation of transcription by RNA polymerase II"/>
    <property type="evidence" value="ECO:0000315"/>
    <property type="project" value="BHF-UCL"/>
</dbReference>
<dbReference type="GO" id="GO:0032760">
    <property type="term" value="P:positive regulation of tumor necrosis factor production"/>
    <property type="evidence" value="ECO:0000250"/>
    <property type="project" value="ARUK-UCL"/>
</dbReference>
<dbReference type="GO" id="GO:0060340">
    <property type="term" value="P:positive regulation of type I interferon-mediated signaling pathway"/>
    <property type="evidence" value="ECO:0000314"/>
    <property type="project" value="BHF-UCL"/>
</dbReference>
<dbReference type="GO" id="GO:0032729">
    <property type="term" value="P:positive regulation of type II interferon production"/>
    <property type="evidence" value="ECO:0007669"/>
    <property type="project" value="Ensembl"/>
</dbReference>
<dbReference type="GO" id="GO:0036342">
    <property type="term" value="P:post-anal tail morphogenesis"/>
    <property type="evidence" value="ECO:0007669"/>
    <property type="project" value="Ensembl"/>
</dbReference>
<dbReference type="GO" id="GO:0099068">
    <property type="term" value="P:postsynapse assembly"/>
    <property type="evidence" value="ECO:0000304"/>
    <property type="project" value="ParkinsonsUK-UCL"/>
</dbReference>
<dbReference type="GO" id="GO:0099170">
    <property type="term" value="P:postsynaptic modulation of chemical synaptic transmission"/>
    <property type="evidence" value="ECO:0007669"/>
    <property type="project" value="Ensembl"/>
</dbReference>
<dbReference type="GO" id="GO:0099054">
    <property type="term" value="P:presynapse assembly"/>
    <property type="evidence" value="ECO:0000304"/>
    <property type="project" value="ParkinsonsUK-UCL"/>
</dbReference>
<dbReference type="GO" id="GO:0003138">
    <property type="term" value="P:primary heart field specification"/>
    <property type="evidence" value="ECO:0007669"/>
    <property type="project" value="Ensembl"/>
</dbReference>
<dbReference type="GO" id="GO:0090009">
    <property type="term" value="P:primitive streak formation"/>
    <property type="evidence" value="ECO:0007669"/>
    <property type="project" value="Ensembl"/>
</dbReference>
<dbReference type="GO" id="GO:0008104">
    <property type="term" value="P:protein localization"/>
    <property type="evidence" value="ECO:0000314"/>
    <property type="project" value="UniProtKB"/>
</dbReference>
<dbReference type="GO" id="GO:0060762">
    <property type="term" value="P:regulation of branching involved in mammary gland duct morphogenesis"/>
    <property type="evidence" value="ECO:0007669"/>
    <property type="project" value="Ensembl"/>
</dbReference>
<dbReference type="GO" id="GO:0043122">
    <property type="term" value="P:regulation of canonical NF-kappaB signal transduction"/>
    <property type="evidence" value="ECO:0000250"/>
    <property type="project" value="ARUK-UCL"/>
</dbReference>
<dbReference type="GO" id="GO:0050727">
    <property type="term" value="P:regulation of inflammatory response"/>
    <property type="evidence" value="ECO:0000303"/>
    <property type="project" value="ARUK-UCL"/>
</dbReference>
<dbReference type="GO" id="GO:0099175">
    <property type="term" value="P:regulation of postsynapse organization"/>
    <property type="evidence" value="ECO:0000314"/>
    <property type="project" value="SynGO"/>
</dbReference>
<dbReference type="GO" id="GO:0099566">
    <property type="term" value="P:regulation of postsynaptic cytosolic calcium ion concentration"/>
    <property type="evidence" value="ECO:0000314"/>
    <property type="project" value="SynGO"/>
</dbReference>
<dbReference type="GO" id="GO:0050807">
    <property type="term" value="P:regulation of synapse organization"/>
    <property type="evidence" value="ECO:0000314"/>
    <property type="project" value="SynGO"/>
</dbReference>
<dbReference type="GO" id="GO:0003139">
    <property type="term" value="P:secondary heart field specification"/>
    <property type="evidence" value="ECO:0007669"/>
    <property type="project" value="Ensembl"/>
</dbReference>
<dbReference type="GO" id="GO:0062009">
    <property type="term" value="P:secondary palate development"/>
    <property type="evidence" value="ECO:0000315"/>
    <property type="project" value="BHF-UCL"/>
</dbReference>
<dbReference type="GO" id="GO:0001756">
    <property type="term" value="P:somitogenesis"/>
    <property type="evidence" value="ECO:0007669"/>
    <property type="project" value="Ensembl"/>
</dbReference>
<dbReference type="GO" id="GO:0070242">
    <property type="term" value="P:thymocyte apoptotic process"/>
    <property type="evidence" value="ECO:0007669"/>
    <property type="project" value="Ensembl"/>
</dbReference>
<dbReference type="GO" id="GO:0003323">
    <property type="term" value="P:type B pancreatic cell development"/>
    <property type="evidence" value="ECO:0007669"/>
    <property type="project" value="Ensembl"/>
</dbReference>
<dbReference type="GO" id="GO:0060157">
    <property type="term" value="P:urinary bladder development"/>
    <property type="evidence" value="ECO:0007669"/>
    <property type="project" value="Ensembl"/>
</dbReference>
<dbReference type="GO" id="GO:0060065">
    <property type="term" value="P:uterus development"/>
    <property type="evidence" value="ECO:0007669"/>
    <property type="project" value="Ensembl"/>
</dbReference>
<dbReference type="GO" id="GO:0060068">
    <property type="term" value="P:vagina development"/>
    <property type="evidence" value="ECO:0007669"/>
    <property type="project" value="Ensembl"/>
</dbReference>
<dbReference type="GO" id="GO:0003281">
    <property type="term" value="P:ventricular septum development"/>
    <property type="evidence" value="ECO:0007669"/>
    <property type="project" value="Ensembl"/>
</dbReference>
<dbReference type="GO" id="GO:0016055">
    <property type="term" value="P:Wnt signaling pathway"/>
    <property type="evidence" value="ECO:0000314"/>
    <property type="project" value="BHF-UCL"/>
</dbReference>
<dbReference type="GO" id="GO:0007223">
    <property type="term" value="P:Wnt signaling pathway, calcium modulating pathway"/>
    <property type="evidence" value="ECO:0000315"/>
    <property type="project" value="UniProtKB"/>
</dbReference>
<dbReference type="GO" id="GO:0060071">
    <property type="term" value="P:Wnt signaling pathway, planar cell polarity pathway"/>
    <property type="evidence" value="ECO:0000250"/>
    <property type="project" value="ParkinsonsUK-UCL"/>
</dbReference>
<dbReference type="GO" id="GO:0042060">
    <property type="term" value="P:wound healing"/>
    <property type="evidence" value="ECO:0000314"/>
    <property type="project" value="UniProtKB"/>
</dbReference>
<dbReference type="CDD" id="cd19347">
    <property type="entry name" value="Wnt_Wnt5a"/>
    <property type="match status" value="1"/>
</dbReference>
<dbReference type="FunFam" id="3.30.2460.20:FF:000001">
    <property type="entry name" value="Wnt homolog"/>
    <property type="match status" value="1"/>
</dbReference>
<dbReference type="Gene3D" id="3.30.2460.20">
    <property type="match status" value="1"/>
</dbReference>
<dbReference type="InterPro" id="IPR005817">
    <property type="entry name" value="Wnt"/>
</dbReference>
<dbReference type="InterPro" id="IPR043158">
    <property type="entry name" value="Wnt_C"/>
</dbReference>
<dbReference type="InterPro" id="IPR018161">
    <property type="entry name" value="Wnt_CS"/>
</dbReference>
<dbReference type="PANTHER" id="PTHR12027:SF33">
    <property type="entry name" value="PROTEIN WNT-5A"/>
    <property type="match status" value="1"/>
</dbReference>
<dbReference type="PANTHER" id="PTHR12027">
    <property type="entry name" value="WNT RELATED"/>
    <property type="match status" value="1"/>
</dbReference>
<dbReference type="Pfam" id="PF00110">
    <property type="entry name" value="wnt"/>
    <property type="match status" value="1"/>
</dbReference>
<dbReference type="PRINTS" id="PR01349">
    <property type="entry name" value="WNTPROTEIN"/>
</dbReference>
<dbReference type="SMART" id="SM00097">
    <property type="entry name" value="WNT1"/>
    <property type="match status" value="1"/>
</dbReference>
<dbReference type="PROSITE" id="PS00246">
    <property type="entry name" value="WNT1"/>
    <property type="match status" value="1"/>
</dbReference>
<name>WNT5A_HUMAN</name>
<accession>P41221</accession>
<accession>A8K4A4</accession>
<accession>Q6P278</accession>
<protein>
    <recommendedName>
        <fullName>Protein Wnt-5a</fullName>
    </recommendedName>
</protein>
<organism>
    <name type="scientific">Homo sapiens</name>
    <name type="common">Human</name>
    <dbReference type="NCBI Taxonomy" id="9606"/>
    <lineage>
        <taxon>Eukaryota</taxon>
        <taxon>Metazoa</taxon>
        <taxon>Chordata</taxon>
        <taxon>Craniata</taxon>
        <taxon>Vertebrata</taxon>
        <taxon>Euteleostomi</taxon>
        <taxon>Mammalia</taxon>
        <taxon>Eutheria</taxon>
        <taxon>Euarchontoglires</taxon>
        <taxon>Primates</taxon>
        <taxon>Haplorrhini</taxon>
        <taxon>Catarrhini</taxon>
        <taxon>Hominidae</taxon>
        <taxon>Homo</taxon>
    </lineage>
</organism>
<feature type="signal peptide" evidence="7">
    <location>
        <begin position="1"/>
        <end position="35"/>
    </location>
</feature>
<feature type="propeptide" id="PRO_0000352796" evidence="1">
    <location>
        <begin position="36"/>
        <end position="61"/>
    </location>
</feature>
<feature type="chain" id="PRO_0000041427" description="Protein Wnt-5a">
    <location>
        <begin position="62"/>
        <end position="380"/>
    </location>
</feature>
<feature type="lipid moiety-binding region" description="O-palmitoleoyl serine; by PORCN" evidence="5">
    <location>
        <position position="244"/>
    </location>
</feature>
<feature type="glycosylation site" description="N-linked (GlcNAc...) asparagine" evidence="7">
    <location>
        <position position="114"/>
    </location>
</feature>
<feature type="glycosylation site" description="N-linked (GlcNAc...) asparagine" evidence="7">
    <location>
        <position position="120"/>
    </location>
</feature>
<feature type="glycosylation site" description="N-linked (GlcNAc...) asparagine" evidence="7">
    <location>
        <position position="312"/>
    </location>
</feature>
<feature type="glycosylation site" description="N-linked (GlcNAc...) asparagine" evidence="7">
    <location>
        <position position="326"/>
    </location>
</feature>
<feature type="disulfide bond" evidence="4">
    <location>
        <begin position="104"/>
        <end position="115"/>
    </location>
</feature>
<feature type="disulfide bond" evidence="4">
    <location>
        <begin position="154"/>
        <end position="162"/>
    </location>
</feature>
<feature type="disulfide bond" evidence="4">
    <location>
        <begin position="164"/>
        <end position="182"/>
    </location>
</feature>
<feature type="disulfide bond" evidence="4">
    <location>
        <begin position="238"/>
        <end position="252"/>
    </location>
</feature>
<feature type="disulfide bond" evidence="4">
    <location>
        <begin position="240"/>
        <end position="247"/>
    </location>
</feature>
<feature type="disulfide bond" evidence="4">
    <location>
        <begin position="309"/>
        <end position="340"/>
    </location>
</feature>
<feature type="disulfide bond" evidence="4">
    <location>
        <begin position="325"/>
        <end position="335"/>
    </location>
</feature>
<feature type="disulfide bond" evidence="4">
    <location>
        <begin position="339"/>
        <end position="379"/>
    </location>
</feature>
<feature type="disulfide bond" evidence="4">
    <location>
        <begin position="355"/>
        <end position="370"/>
    </location>
</feature>
<feature type="disulfide bond" evidence="4">
    <location>
        <begin position="357"/>
        <end position="367"/>
    </location>
</feature>
<feature type="disulfide bond" evidence="4">
    <location>
        <begin position="362"/>
        <end position="363"/>
    </location>
</feature>
<feature type="splice variant" id="VSP_035594" description="In isoform 2." evidence="17 18">
    <location>
        <begin position="1"/>
        <end position="15"/>
    </location>
</feature>
<feature type="sequence variant" id="VAR_066623" description="In DRS1; hypomorphic mutation; dbSNP:rs786200925." evidence="11">
    <original>C</original>
    <variation>S</variation>
    <location>
        <position position="83"/>
    </location>
</feature>
<feature type="sequence variant" id="VAR_083248" description="In DRS1; uncertain significance." evidence="14">
    <original>S</original>
    <variation>C</variation>
    <location>
        <position position="160"/>
    </location>
</feature>
<feature type="sequence variant" id="VAR_083249" description="In DRS1." evidence="14">
    <original>C</original>
    <variation>CGC</variation>
    <location>
        <position position="164"/>
    </location>
</feature>
<feature type="sequence variant" id="VAR_066629" description="In DRS1; hypomorphic mutation; dbSNP:rs387906663." evidence="11">
    <original>C</original>
    <variation>R</variation>
    <location>
        <position position="182"/>
    </location>
</feature>